<protein>
    <recommendedName>
        <fullName evidence="1">UDP-N-acetylglucosamine 1-carboxyvinyltransferase</fullName>
        <ecNumber evidence="1">2.5.1.7</ecNumber>
    </recommendedName>
    <alternativeName>
        <fullName evidence="1">Enoylpyruvate transferase</fullName>
    </alternativeName>
    <alternativeName>
        <fullName evidence="1">UDP-N-acetylglucosamine enolpyruvyl transferase</fullName>
        <shortName evidence="1">EPT</shortName>
    </alternativeName>
</protein>
<sequence>MDKIVIRGGKKLKGEIVVSGSKNSALPILFATLLTDDPVMITNVPSLTDIDTAIAFLNFIGKKTVKEGNTVKAYSSYKYKHIAPYDLVRKMRASILIMGPLLVRLKRIEVSLPGGCAIGARPVDIHLAAFKKLGAKISVKGGYVKTSAKNGLKGATISFRVPSVGATENILLTAVLAKGKTIIKNAAREPEIEDLANVLTKMGAKVMGAGTKNIEIEGVDKLHGFMHEVIPDRIEAATYLIAAAITKGGVILKKVIPQHLKSVNDKLKKCGLCIKETKNTISAEWVKNLKPQNVKTEAYPGFPTDVQAQWMSLMCLLNGESCIEENVFENRFLHVSELQRFGADITVNGKTVNIKGVKEFSGAPVMVSDLRAGAALVLAGLAAKGKTVVSRIYHLNRGYDMLEKKLKKLGADIRIIHN</sequence>
<feature type="chain" id="PRO_1000094730" description="UDP-N-acetylglucosamine 1-carboxyvinyltransferase">
    <location>
        <begin position="1"/>
        <end position="418"/>
    </location>
</feature>
<feature type="active site" description="Proton donor" evidence="1">
    <location>
        <position position="116"/>
    </location>
</feature>
<feature type="binding site" evidence="1">
    <location>
        <begin position="22"/>
        <end position="23"/>
    </location>
    <ligand>
        <name>phosphoenolpyruvate</name>
        <dbReference type="ChEBI" id="CHEBI:58702"/>
    </ligand>
</feature>
<feature type="binding site" evidence="1">
    <location>
        <position position="92"/>
    </location>
    <ligand>
        <name>UDP-N-acetyl-alpha-D-glucosamine</name>
        <dbReference type="ChEBI" id="CHEBI:57705"/>
    </ligand>
</feature>
<feature type="binding site" evidence="1">
    <location>
        <position position="305"/>
    </location>
    <ligand>
        <name>UDP-N-acetyl-alpha-D-glucosamine</name>
        <dbReference type="ChEBI" id="CHEBI:57705"/>
    </ligand>
</feature>
<feature type="binding site" evidence="1">
    <location>
        <position position="327"/>
    </location>
    <ligand>
        <name>UDP-N-acetyl-alpha-D-glucosamine</name>
        <dbReference type="ChEBI" id="CHEBI:57705"/>
    </ligand>
</feature>
<feature type="modified residue" description="2-(S-cysteinyl)pyruvic acid O-phosphothioketal" evidence="1">
    <location>
        <position position="116"/>
    </location>
</feature>
<dbReference type="EC" id="2.5.1.7" evidence="1"/>
<dbReference type="EMBL" id="AP009510">
    <property type="protein sequence ID" value="BAG13884.1"/>
    <property type="molecule type" value="Genomic_DNA"/>
</dbReference>
<dbReference type="RefSeq" id="WP_015423410.1">
    <property type="nucleotide sequence ID" value="NC_020419.1"/>
</dbReference>
<dbReference type="SMR" id="B1H052"/>
<dbReference type="STRING" id="471821.TGRD_401"/>
<dbReference type="KEGG" id="rsd:TGRD_401"/>
<dbReference type="PATRIC" id="fig|471821.5.peg.654"/>
<dbReference type="HOGENOM" id="CLU_027387_0_0_0"/>
<dbReference type="UniPathway" id="UPA00219"/>
<dbReference type="Proteomes" id="UP000001691">
    <property type="component" value="Chromosome"/>
</dbReference>
<dbReference type="GO" id="GO:0005737">
    <property type="term" value="C:cytoplasm"/>
    <property type="evidence" value="ECO:0007669"/>
    <property type="project" value="UniProtKB-SubCell"/>
</dbReference>
<dbReference type="GO" id="GO:0008760">
    <property type="term" value="F:UDP-N-acetylglucosamine 1-carboxyvinyltransferase activity"/>
    <property type="evidence" value="ECO:0007669"/>
    <property type="project" value="UniProtKB-UniRule"/>
</dbReference>
<dbReference type="GO" id="GO:0051301">
    <property type="term" value="P:cell division"/>
    <property type="evidence" value="ECO:0007669"/>
    <property type="project" value="UniProtKB-KW"/>
</dbReference>
<dbReference type="GO" id="GO:0071555">
    <property type="term" value="P:cell wall organization"/>
    <property type="evidence" value="ECO:0007669"/>
    <property type="project" value="UniProtKB-KW"/>
</dbReference>
<dbReference type="GO" id="GO:0009252">
    <property type="term" value="P:peptidoglycan biosynthetic process"/>
    <property type="evidence" value="ECO:0007669"/>
    <property type="project" value="UniProtKB-UniRule"/>
</dbReference>
<dbReference type="GO" id="GO:0008360">
    <property type="term" value="P:regulation of cell shape"/>
    <property type="evidence" value="ECO:0007669"/>
    <property type="project" value="UniProtKB-KW"/>
</dbReference>
<dbReference type="GO" id="GO:0019277">
    <property type="term" value="P:UDP-N-acetylgalactosamine biosynthetic process"/>
    <property type="evidence" value="ECO:0007669"/>
    <property type="project" value="InterPro"/>
</dbReference>
<dbReference type="CDD" id="cd01555">
    <property type="entry name" value="UdpNAET"/>
    <property type="match status" value="1"/>
</dbReference>
<dbReference type="FunFam" id="3.65.10.10:FF:000001">
    <property type="entry name" value="UDP-N-acetylglucosamine 1-carboxyvinyltransferase"/>
    <property type="match status" value="1"/>
</dbReference>
<dbReference type="Gene3D" id="3.65.10.10">
    <property type="entry name" value="Enolpyruvate transferase domain"/>
    <property type="match status" value="2"/>
</dbReference>
<dbReference type="HAMAP" id="MF_00111">
    <property type="entry name" value="MurA"/>
    <property type="match status" value="1"/>
</dbReference>
<dbReference type="InterPro" id="IPR001986">
    <property type="entry name" value="Enolpyruvate_Tfrase_dom"/>
</dbReference>
<dbReference type="InterPro" id="IPR036968">
    <property type="entry name" value="Enolpyruvate_Tfrase_sf"/>
</dbReference>
<dbReference type="InterPro" id="IPR050068">
    <property type="entry name" value="MurA_subfamily"/>
</dbReference>
<dbReference type="InterPro" id="IPR013792">
    <property type="entry name" value="RNA3'P_cycl/enolpyr_Trfase_a/b"/>
</dbReference>
<dbReference type="InterPro" id="IPR005750">
    <property type="entry name" value="UDP_GlcNAc_COvinyl_MurA"/>
</dbReference>
<dbReference type="NCBIfam" id="TIGR01072">
    <property type="entry name" value="murA"/>
    <property type="match status" value="1"/>
</dbReference>
<dbReference type="NCBIfam" id="NF006873">
    <property type="entry name" value="PRK09369.1"/>
    <property type="match status" value="1"/>
</dbReference>
<dbReference type="PANTHER" id="PTHR43783">
    <property type="entry name" value="UDP-N-ACETYLGLUCOSAMINE 1-CARBOXYVINYLTRANSFERASE"/>
    <property type="match status" value="1"/>
</dbReference>
<dbReference type="PANTHER" id="PTHR43783:SF1">
    <property type="entry name" value="UDP-N-ACETYLGLUCOSAMINE 1-CARBOXYVINYLTRANSFERASE"/>
    <property type="match status" value="1"/>
</dbReference>
<dbReference type="Pfam" id="PF00275">
    <property type="entry name" value="EPSP_synthase"/>
    <property type="match status" value="1"/>
</dbReference>
<dbReference type="SUPFAM" id="SSF55205">
    <property type="entry name" value="EPT/RTPC-like"/>
    <property type="match status" value="1"/>
</dbReference>
<accession>B1H052</accession>
<name>MURA_ENDTX</name>
<reference key="1">
    <citation type="journal article" date="2008" name="Proc. Natl. Acad. Sci. U.S.A.">
        <title>Complete genome of the uncultured termite group 1 bacteria in a single host protist cell.</title>
        <authorList>
            <person name="Hongoh Y."/>
            <person name="Sharma V.K."/>
            <person name="Prakash T."/>
            <person name="Noda S."/>
            <person name="Taylor T.D."/>
            <person name="Kudo T."/>
            <person name="Sakaki Y."/>
            <person name="Toyoda A."/>
            <person name="Hattori M."/>
            <person name="Ohkuma M."/>
        </authorList>
    </citation>
    <scope>NUCLEOTIDE SEQUENCE [LARGE SCALE GENOMIC DNA]</scope>
</reference>
<proteinExistence type="inferred from homology"/>
<evidence type="ECO:0000255" key="1">
    <source>
        <dbReference type="HAMAP-Rule" id="MF_00111"/>
    </source>
</evidence>
<keyword id="KW-0131">Cell cycle</keyword>
<keyword id="KW-0132">Cell division</keyword>
<keyword id="KW-0133">Cell shape</keyword>
<keyword id="KW-0961">Cell wall biogenesis/degradation</keyword>
<keyword id="KW-0963">Cytoplasm</keyword>
<keyword id="KW-0573">Peptidoglycan synthesis</keyword>
<keyword id="KW-0670">Pyruvate</keyword>
<keyword id="KW-0808">Transferase</keyword>
<gene>
    <name evidence="1" type="primary">murA</name>
    <name type="ordered locus">TGRD_401</name>
</gene>
<organism>
    <name type="scientific">Endomicrobium trichonymphae</name>
    <dbReference type="NCBI Taxonomy" id="1408204"/>
    <lineage>
        <taxon>Bacteria</taxon>
        <taxon>Pseudomonadati</taxon>
        <taxon>Elusimicrobiota</taxon>
        <taxon>Endomicrobiia</taxon>
        <taxon>Endomicrobiales</taxon>
        <taxon>Endomicrobiaceae</taxon>
        <taxon>Candidatus Endomicrobiellum</taxon>
    </lineage>
</organism>
<comment type="function">
    <text evidence="1">Cell wall formation. Adds enolpyruvyl to UDP-N-acetylglucosamine.</text>
</comment>
<comment type="catalytic activity">
    <reaction evidence="1">
        <text>phosphoenolpyruvate + UDP-N-acetyl-alpha-D-glucosamine = UDP-N-acetyl-3-O-(1-carboxyvinyl)-alpha-D-glucosamine + phosphate</text>
        <dbReference type="Rhea" id="RHEA:18681"/>
        <dbReference type="ChEBI" id="CHEBI:43474"/>
        <dbReference type="ChEBI" id="CHEBI:57705"/>
        <dbReference type="ChEBI" id="CHEBI:58702"/>
        <dbReference type="ChEBI" id="CHEBI:68483"/>
        <dbReference type="EC" id="2.5.1.7"/>
    </reaction>
</comment>
<comment type="pathway">
    <text evidence="1">Cell wall biogenesis; peptidoglycan biosynthesis.</text>
</comment>
<comment type="subcellular location">
    <subcellularLocation>
        <location evidence="1">Cytoplasm</location>
    </subcellularLocation>
</comment>
<comment type="similarity">
    <text evidence="1">Belongs to the EPSP synthase family. MurA subfamily.</text>
</comment>